<protein>
    <recommendedName>
        <fullName>Phosphate propanoyltransferase</fullName>
        <ecNumber>2.3.1.222</ecNumber>
    </recommendedName>
    <alternativeName>
        <fullName>Phosphate acyltransferase PduL</fullName>
    </alternativeName>
    <alternativeName>
        <fullName>Phosphotransacylase PduL</fullName>
        <shortName>PTAC</shortName>
    </alternativeName>
    <alternativeName>
        <fullName>Propanediol utilization protein PduL</fullName>
    </alternativeName>
</protein>
<comment type="function">
    <text evidence="2">Involved in 1,2-propanediol (1,2-PD) degradation by catalyzing the conversion of propanoyl-CoA to propanoyl-phosphate.</text>
</comment>
<comment type="catalytic activity">
    <reaction evidence="2">
        <text>propanoyl-CoA + phosphate = propanoyl phosphate + CoA</text>
        <dbReference type="Rhea" id="RHEA:28046"/>
        <dbReference type="ChEBI" id="CHEBI:43474"/>
        <dbReference type="ChEBI" id="CHEBI:57287"/>
        <dbReference type="ChEBI" id="CHEBI:57392"/>
        <dbReference type="ChEBI" id="CHEBI:58933"/>
        <dbReference type="EC" id="2.3.1.222"/>
    </reaction>
</comment>
<comment type="cofactor">
    <cofactor evidence="1">
        <name>Zn(2+)</name>
        <dbReference type="ChEBI" id="CHEBI:29105"/>
    </cofactor>
    <text evidence="1">There are 2 Zn(2+) ions per monomer; Zn(2+) and CoA bind inbetween the 2 domains in each monomer.</text>
</comment>
<comment type="pathway">
    <text>Polyol metabolism; 1,2-propanediol degradation.</text>
</comment>
<comment type="subcellular location">
    <subcellularLocation>
        <location evidence="3">Cytoplasm</location>
    </subcellularLocation>
</comment>
<comment type="domain">
    <text evidence="1">Formed by 2 beta-barrels, each is capped on both ends by short alpha-helices.</text>
</comment>
<comment type="similarity">
    <text evidence="3">Belongs to the PduL family.</text>
</comment>
<evidence type="ECO:0000250" key="1">
    <source>
        <dbReference type="UniProtKB" id="Q21A54"/>
    </source>
</evidence>
<evidence type="ECO:0000250" key="2">
    <source>
        <dbReference type="UniProtKB" id="Q9XDN5"/>
    </source>
</evidence>
<evidence type="ECO:0000305" key="3"/>
<feature type="chain" id="PRO_0000407703" description="Phosphate propanoyltransferase">
    <location>
        <begin position="1"/>
        <end position="210"/>
    </location>
</feature>
<feature type="binding site" evidence="1">
    <location>
        <begin position="27"/>
        <end position="29"/>
    </location>
    <ligand>
        <name>CoA</name>
        <dbReference type="ChEBI" id="CHEBI:57287"/>
    </ligand>
</feature>
<feature type="binding site" evidence="1">
    <location>
        <position position="31"/>
    </location>
    <ligand>
        <name>Zn(2+)</name>
        <dbReference type="ChEBI" id="CHEBI:29105"/>
        <label>1</label>
    </ligand>
</feature>
<feature type="binding site" evidence="1">
    <location>
        <position position="33"/>
    </location>
    <ligand>
        <name>Zn(2+)</name>
        <dbReference type="ChEBI" id="CHEBI:29105"/>
        <label>1</label>
    </ligand>
</feature>
<feature type="binding site" evidence="1">
    <location>
        <position position="73"/>
    </location>
    <ligand>
        <name>CoA</name>
        <dbReference type="ChEBI" id="CHEBI:57287"/>
    </ligand>
</feature>
<feature type="binding site" evidence="1">
    <location>
        <position position="80"/>
    </location>
    <ligand>
        <name>CoA</name>
        <dbReference type="ChEBI" id="CHEBI:57287"/>
    </ligand>
</feature>
<feature type="binding site" evidence="1">
    <location>
        <position position="86"/>
    </location>
    <ligand>
        <name>phosphate</name>
        <dbReference type="ChEBI" id="CHEBI:43474"/>
    </ligand>
</feature>
<feature type="binding site" evidence="1">
    <location>
        <position position="92"/>
    </location>
    <ligand>
        <name>Zn(2+)</name>
        <dbReference type="ChEBI" id="CHEBI:29105"/>
        <label>1</label>
    </ligand>
</feature>
<feature type="binding site" evidence="1">
    <location>
        <position position="99"/>
    </location>
    <ligand>
        <name>CoA</name>
        <dbReference type="ChEBI" id="CHEBI:57287"/>
    </ligand>
</feature>
<feature type="binding site" evidence="1">
    <location>
        <position position="140"/>
    </location>
    <ligand>
        <name>Zn(2+)</name>
        <dbReference type="ChEBI" id="CHEBI:29105"/>
        <label>2</label>
    </ligand>
</feature>
<feature type="binding site" evidence="1">
    <location>
        <position position="142"/>
    </location>
    <ligand>
        <name>Zn(2+)</name>
        <dbReference type="ChEBI" id="CHEBI:29105"/>
        <label>2</label>
    </ligand>
</feature>
<feature type="binding site" evidence="1">
    <location>
        <position position="188"/>
    </location>
    <ligand>
        <name>Zn(2+)</name>
        <dbReference type="ChEBI" id="CHEBI:29105"/>
        <label>2</label>
    </ligand>
</feature>
<feature type="binding site" evidence="1">
    <location>
        <position position="195"/>
    </location>
    <ligand>
        <name>CoA</name>
        <dbReference type="ChEBI" id="CHEBI:57287"/>
    </ligand>
</feature>
<name>PDUL_THEMA</name>
<keyword id="KW-0012">Acyltransferase</keyword>
<keyword id="KW-0963">Cytoplasm</keyword>
<keyword id="KW-0479">Metal-binding</keyword>
<keyword id="KW-1185">Reference proteome</keyword>
<keyword id="KW-0808">Transferase</keyword>
<keyword id="KW-0862">Zinc</keyword>
<sequence length="210" mass="23543">MITDGIMHKVREVYQLLRKEPGIIVGVSNRHVHLSREDLETLFGEGYELTPVKELRQPGQYAAKETVTIVGPKGAIENVRVLGPVRKETQVEISRTDAFRLGVRPPVRDSGDLEGTPGIVIIGPNGILVKEKGVIIAKRHIHMHPKDAEYYGVKDKDIVKVIVESGDRRLIFDDVLIRVREDFALEFHVDTDEANAAMLNTGDLVYIVEF</sequence>
<organism>
    <name type="scientific">Thermotoga maritima (strain ATCC 43589 / DSM 3109 / JCM 10099 / NBRC 100826 / MSB8)</name>
    <dbReference type="NCBI Taxonomy" id="243274"/>
    <lineage>
        <taxon>Bacteria</taxon>
        <taxon>Thermotogati</taxon>
        <taxon>Thermotogota</taxon>
        <taxon>Thermotogae</taxon>
        <taxon>Thermotogales</taxon>
        <taxon>Thermotogaceae</taxon>
        <taxon>Thermotoga</taxon>
    </lineage>
</organism>
<reference key="1">
    <citation type="journal article" date="1999" name="Nature">
        <title>Evidence for lateral gene transfer between Archaea and Bacteria from genome sequence of Thermotoga maritima.</title>
        <authorList>
            <person name="Nelson K.E."/>
            <person name="Clayton R.A."/>
            <person name="Gill S.R."/>
            <person name="Gwinn M.L."/>
            <person name="Dodson R.J."/>
            <person name="Haft D.H."/>
            <person name="Hickey E.K."/>
            <person name="Peterson J.D."/>
            <person name="Nelson W.C."/>
            <person name="Ketchum K.A."/>
            <person name="McDonald L.A."/>
            <person name="Utterback T.R."/>
            <person name="Malek J.A."/>
            <person name="Linher K.D."/>
            <person name="Garrett M.M."/>
            <person name="Stewart A.M."/>
            <person name="Cotton M.D."/>
            <person name="Pratt M.S."/>
            <person name="Phillips C.A."/>
            <person name="Richardson D.L."/>
            <person name="Heidelberg J.F."/>
            <person name="Sutton G.G."/>
            <person name="Fleischmann R.D."/>
            <person name="Eisen J.A."/>
            <person name="White O."/>
            <person name="Salzberg S.L."/>
            <person name="Smith H.O."/>
            <person name="Venter J.C."/>
            <person name="Fraser C.M."/>
        </authorList>
    </citation>
    <scope>NUCLEOTIDE SEQUENCE [LARGE SCALE GENOMIC DNA]</scope>
    <source>
        <strain>ATCC 43589 / DSM 3109 / JCM 10099 / NBRC 100826 / MSB8</strain>
    </source>
</reference>
<accession>Q9WYK8</accession>
<gene>
    <name type="primary">pduL</name>
    <name type="ordered locus">TM_0375</name>
</gene>
<dbReference type="EC" id="2.3.1.222"/>
<dbReference type="EMBL" id="AE000512">
    <property type="protein sequence ID" value="AAD35462.1"/>
    <property type="molecule type" value="Genomic_DNA"/>
</dbReference>
<dbReference type="PIR" id="E72385">
    <property type="entry name" value="E72385"/>
</dbReference>
<dbReference type="RefSeq" id="NP_228186.1">
    <property type="nucleotide sequence ID" value="NC_000853.1"/>
</dbReference>
<dbReference type="RefSeq" id="WP_010865105.1">
    <property type="nucleotide sequence ID" value="NC_000853.1"/>
</dbReference>
<dbReference type="SMR" id="Q9WYK8"/>
<dbReference type="STRING" id="243274.TM_0375"/>
<dbReference type="PaxDb" id="243274-THEMA_02840"/>
<dbReference type="EnsemblBacteria" id="AAD35462">
    <property type="protein sequence ID" value="AAD35462"/>
    <property type="gene ID" value="TM_0375"/>
</dbReference>
<dbReference type="KEGG" id="tma:TM0375"/>
<dbReference type="KEGG" id="tmw:THMA_0383"/>
<dbReference type="PATRIC" id="fig|243274.19.peg.372"/>
<dbReference type="eggNOG" id="COG4869">
    <property type="taxonomic scope" value="Bacteria"/>
</dbReference>
<dbReference type="InParanoid" id="Q9WYK8"/>
<dbReference type="OrthoDB" id="9784365at2"/>
<dbReference type="UniPathway" id="UPA00621"/>
<dbReference type="Proteomes" id="UP000008183">
    <property type="component" value="Chromosome"/>
</dbReference>
<dbReference type="GO" id="GO:0005737">
    <property type="term" value="C:cytoplasm"/>
    <property type="evidence" value="ECO:0007669"/>
    <property type="project" value="UniProtKB-SubCell"/>
</dbReference>
<dbReference type="GO" id="GO:0016747">
    <property type="term" value="F:acyltransferase activity, transferring groups other than amino-acyl groups"/>
    <property type="evidence" value="ECO:0007669"/>
    <property type="project" value="InterPro"/>
</dbReference>
<dbReference type="GO" id="GO:0046872">
    <property type="term" value="F:metal ion binding"/>
    <property type="evidence" value="ECO:0007669"/>
    <property type="project" value="UniProtKB-KW"/>
</dbReference>
<dbReference type="GO" id="GO:0051144">
    <property type="term" value="P:propanediol catabolic process"/>
    <property type="evidence" value="ECO:0007669"/>
    <property type="project" value="UniProtKB-UniPathway"/>
</dbReference>
<dbReference type="InterPro" id="IPR009010">
    <property type="entry name" value="Asp_de-COase-like_dom_sf"/>
</dbReference>
<dbReference type="InterPro" id="IPR008300">
    <property type="entry name" value="PTAC"/>
</dbReference>
<dbReference type="NCBIfam" id="NF011652">
    <property type="entry name" value="PRK15070.1"/>
    <property type="match status" value="1"/>
</dbReference>
<dbReference type="PANTHER" id="PTHR39453">
    <property type="entry name" value="PHOSPHATE PROPANOYLTRANSFERASE"/>
    <property type="match status" value="1"/>
</dbReference>
<dbReference type="PANTHER" id="PTHR39453:SF1">
    <property type="entry name" value="PHOSPHATE PROPANOYLTRANSFERASE"/>
    <property type="match status" value="1"/>
</dbReference>
<dbReference type="Pfam" id="PF06130">
    <property type="entry name" value="PTAC"/>
    <property type="match status" value="1"/>
</dbReference>
<dbReference type="PIRSF" id="PIRSF010130">
    <property type="entry name" value="PduL"/>
    <property type="match status" value="1"/>
</dbReference>
<dbReference type="SUPFAM" id="SSF50692">
    <property type="entry name" value="ADC-like"/>
    <property type="match status" value="1"/>
</dbReference>
<proteinExistence type="inferred from homology"/>